<organism>
    <name type="scientific">Helicobacter pylori (strain G27)</name>
    <dbReference type="NCBI Taxonomy" id="563041"/>
    <lineage>
        <taxon>Bacteria</taxon>
        <taxon>Pseudomonadati</taxon>
        <taxon>Campylobacterota</taxon>
        <taxon>Epsilonproteobacteria</taxon>
        <taxon>Campylobacterales</taxon>
        <taxon>Helicobacteraceae</taxon>
        <taxon>Helicobacter</taxon>
    </lineage>
</organism>
<evidence type="ECO:0000255" key="1">
    <source>
        <dbReference type="HAMAP-Rule" id="MF_00249"/>
    </source>
</evidence>
<protein>
    <recommendedName>
        <fullName evidence="1">ATP-dependent protease ATPase subunit HslU</fullName>
    </recommendedName>
    <alternativeName>
        <fullName evidence="1">Unfoldase HslU</fullName>
    </alternativeName>
</protein>
<proteinExistence type="inferred from homology"/>
<keyword id="KW-0067">ATP-binding</keyword>
<keyword id="KW-0143">Chaperone</keyword>
<keyword id="KW-0963">Cytoplasm</keyword>
<keyword id="KW-0547">Nucleotide-binding</keyword>
<keyword id="KW-1185">Reference proteome</keyword>
<gene>
    <name evidence="1" type="primary">hslU</name>
    <name type="ordered locus">HPG27_475</name>
</gene>
<dbReference type="EMBL" id="CP001173">
    <property type="protein sequence ID" value="ACI27238.1"/>
    <property type="molecule type" value="Genomic_DNA"/>
</dbReference>
<dbReference type="RefSeq" id="WP_000040756.1">
    <property type="nucleotide sequence ID" value="NC_011333.1"/>
</dbReference>
<dbReference type="SMR" id="B5Z6N9"/>
<dbReference type="KEGG" id="hpg:HPG27_475"/>
<dbReference type="HOGENOM" id="CLU_033123_0_0_7"/>
<dbReference type="Proteomes" id="UP000001735">
    <property type="component" value="Chromosome"/>
</dbReference>
<dbReference type="GO" id="GO:0009376">
    <property type="term" value="C:HslUV protease complex"/>
    <property type="evidence" value="ECO:0007669"/>
    <property type="project" value="UniProtKB-UniRule"/>
</dbReference>
<dbReference type="GO" id="GO:0005524">
    <property type="term" value="F:ATP binding"/>
    <property type="evidence" value="ECO:0007669"/>
    <property type="project" value="UniProtKB-UniRule"/>
</dbReference>
<dbReference type="GO" id="GO:0016887">
    <property type="term" value="F:ATP hydrolysis activity"/>
    <property type="evidence" value="ECO:0007669"/>
    <property type="project" value="InterPro"/>
</dbReference>
<dbReference type="GO" id="GO:0008233">
    <property type="term" value="F:peptidase activity"/>
    <property type="evidence" value="ECO:0007669"/>
    <property type="project" value="InterPro"/>
</dbReference>
<dbReference type="GO" id="GO:0036402">
    <property type="term" value="F:proteasome-activating activity"/>
    <property type="evidence" value="ECO:0007669"/>
    <property type="project" value="UniProtKB-UniRule"/>
</dbReference>
<dbReference type="GO" id="GO:0043335">
    <property type="term" value="P:protein unfolding"/>
    <property type="evidence" value="ECO:0007669"/>
    <property type="project" value="UniProtKB-UniRule"/>
</dbReference>
<dbReference type="GO" id="GO:0051603">
    <property type="term" value="P:proteolysis involved in protein catabolic process"/>
    <property type="evidence" value="ECO:0007669"/>
    <property type="project" value="TreeGrafter"/>
</dbReference>
<dbReference type="CDD" id="cd19498">
    <property type="entry name" value="RecA-like_HslU"/>
    <property type="match status" value="1"/>
</dbReference>
<dbReference type="Gene3D" id="1.10.8.60">
    <property type="match status" value="1"/>
</dbReference>
<dbReference type="Gene3D" id="3.40.50.300">
    <property type="entry name" value="P-loop containing nucleotide triphosphate hydrolases"/>
    <property type="match status" value="2"/>
</dbReference>
<dbReference type="HAMAP" id="MF_00249">
    <property type="entry name" value="HslU"/>
    <property type="match status" value="1"/>
</dbReference>
<dbReference type="InterPro" id="IPR003593">
    <property type="entry name" value="AAA+_ATPase"/>
</dbReference>
<dbReference type="InterPro" id="IPR050052">
    <property type="entry name" value="ATP-dep_Clp_protease_ClpX"/>
</dbReference>
<dbReference type="InterPro" id="IPR003959">
    <property type="entry name" value="ATPase_AAA_core"/>
</dbReference>
<dbReference type="InterPro" id="IPR019489">
    <property type="entry name" value="Clp_ATPase_C"/>
</dbReference>
<dbReference type="InterPro" id="IPR004491">
    <property type="entry name" value="HslU"/>
</dbReference>
<dbReference type="InterPro" id="IPR027417">
    <property type="entry name" value="P-loop_NTPase"/>
</dbReference>
<dbReference type="NCBIfam" id="TIGR00390">
    <property type="entry name" value="hslU"/>
    <property type="match status" value="1"/>
</dbReference>
<dbReference type="NCBIfam" id="NF003544">
    <property type="entry name" value="PRK05201.1"/>
    <property type="match status" value="1"/>
</dbReference>
<dbReference type="PANTHER" id="PTHR48102">
    <property type="entry name" value="ATP-DEPENDENT CLP PROTEASE ATP-BINDING SUBUNIT CLPX-LIKE, MITOCHONDRIAL-RELATED"/>
    <property type="match status" value="1"/>
</dbReference>
<dbReference type="PANTHER" id="PTHR48102:SF3">
    <property type="entry name" value="ATP-DEPENDENT PROTEASE ATPASE SUBUNIT HSLU"/>
    <property type="match status" value="1"/>
</dbReference>
<dbReference type="Pfam" id="PF00004">
    <property type="entry name" value="AAA"/>
    <property type="match status" value="1"/>
</dbReference>
<dbReference type="Pfam" id="PF07724">
    <property type="entry name" value="AAA_2"/>
    <property type="match status" value="1"/>
</dbReference>
<dbReference type="Pfam" id="PF10431">
    <property type="entry name" value="ClpB_D2-small"/>
    <property type="match status" value="1"/>
</dbReference>
<dbReference type="SMART" id="SM00382">
    <property type="entry name" value="AAA"/>
    <property type="match status" value="1"/>
</dbReference>
<dbReference type="SMART" id="SM01086">
    <property type="entry name" value="ClpB_D2-small"/>
    <property type="match status" value="1"/>
</dbReference>
<dbReference type="SUPFAM" id="SSF52540">
    <property type="entry name" value="P-loop containing nucleoside triphosphate hydrolases"/>
    <property type="match status" value="1"/>
</dbReference>
<name>HSLU_HELPG</name>
<accession>B5Z6N9</accession>
<reference key="1">
    <citation type="journal article" date="2009" name="J. Bacteriol.">
        <title>The complete genome sequence of Helicobacter pylori strain G27.</title>
        <authorList>
            <person name="Baltrus D.A."/>
            <person name="Amieva M.R."/>
            <person name="Covacci A."/>
            <person name="Lowe T.M."/>
            <person name="Merrell D.S."/>
            <person name="Ottemann K.M."/>
            <person name="Stein M."/>
            <person name="Salama N.R."/>
            <person name="Guillemin K."/>
        </authorList>
    </citation>
    <scope>NUCLEOTIDE SEQUENCE [LARGE SCALE GENOMIC DNA]</scope>
    <source>
        <strain>G27</strain>
    </source>
</reference>
<feature type="chain" id="PRO_1000100952" description="ATP-dependent protease ATPase subunit HslU">
    <location>
        <begin position="1"/>
        <end position="443"/>
    </location>
</feature>
<feature type="binding site" evidence="1">
    <location>
        <position position="20"/>
    </location>
    <ligand>
        <name>ATP</name>
        <dbReference type="ChEBI" id="CHEBI:30616"/>
    </ligand>
</feature>
<feature type="binding site" evidence="1">
    <location>
        <begin position="62"/>
        <end position="67"/>
    </location>
    <ligand>
        <name>ATP</name>
        <dbReference type="ChEBI" id="CHEBI:30616"/>
    </ligand>
</feature>
<feature type="binding site" evidence="1">
    <location>
        <position position="255"/>
    </location>
    <ligand>
        <name>ATP</name>
        <dbReference type="ChEBI" id="CHEBI:30616"/>
    </ligand>
</feature>
<feature type="binding site" evidence="1">
    <location>
        <position position="321"/>
    </location>
    <ligand>
        <name>ATP</name>
        <dbReference type="ChEBI" id="CHEBI:30616"/>
    </ligand>
</feature>
<feature type="binding site" evidence="1">
    <location>
        <position position="393"/>
    </location>
    <ligand>
        <name>ATP</name>
        <dbReference type="ChEBI" id="CHEBI:30616"/>
    </ligand>
</feature>
<comment type="function">
    <text evidence="1">ATPase subunit of a proteasome-like degradation complex; this subunit has chaperone activity. The binding of ATP and its subsequent hydrolysis by HslU are essential for unfolding of protein substrates subsequently hydrolyzed by HslV. HslU recognizes the N-terminal part of its protein substrates and unfolds these before they are guided to HslV for hydrolysis.</text>
</comment>
<comment type="subunit">
    <text evidence="1">A double ring-shaped homohexamer of HslV is capped on each side by a ring-shaped HslU homohexamer. The assembly of the HslU/HslV complex is dependent on binding of ATP.</text>
</comment>
<comment type="subcellular location">
    <subcellularLocation>
        <location evidence="1">Cytoplasm</location>
    </subcellularLocation>
</comment>
<comment type="similarity">
    <text evidence="1">Belongs to the ClpX chaperone family. HslU subfamily.</text>
</comment>
<sequence>MSKLNMTPREIVAYLDEYIIGQKEAKKSIAIAFRNRYRRLQLEKSLQEEITPKNILMIGSTGVGKTEIARRIAKIMELPFVKVEASKYTEVGFVGRDVESMVRDLVNNSVLLVENEHKEKLKDKIEEAVIEKIAKKLLPPLPNGVSEEKKQEYANSLLKMQQRIAQGELDNREIEIEVRKKSIEIDSNVPPEILRVQENLIKVFHKEQDKVKKTLSVKEAKEALKAEISDTLLDGEAIKMEGLKRAESSGVIFIDEIDKIAVSSKEGSRQDPSKEGVQRDLLPIVEGSVVNTKYGSIKTEHILFIAAGAFHLSKPSDLIPELQGRFPLRVELENLTEEIMYMILTQTKTSIIKQYQALLKVEGVEIAFEDDAIKELAKLSYNANQKSEDIGARRLHTTIEKVLEDISFEAEDYSGQKVTITKELVQSKLEDLVADENLVKYIL</sequence>